<proteinExistence type="predicted"/>
<name>Y1582_ARCFU</name>
<sequence>MGSLSTLSLNLSHVLALFLVSFILMAPYTAFILKLVKKSDLRTATLTGIVAGILSNPGLFAYMGQWI</sequence>
<keyword id="KW-1003">Cell membrane</keyword>
<keyword id="KW-0472">Membrane</keyword>
<keyword id="KW-1185">Reference proteome</keyword>
<keyword id="KW-0812">Transmembrane</keyword>
<keyword id="KW-1133">Transmembrane helix</keyword>
<organism>
    <name type="scientific">Archaeoglobus fulgidus (strain ATCC 49558 / DSM 4304 / JCM 9628 / NBRC 100126 / VC-16)</name>
    <dbReference type="NCBI Taxonomy" id="224325"/>
    <lineage>
        <taxon>Archaea</taxon>
        <taxon>Methanobacteriati</taxon>
        <taxon>Methanobacteriota</taxon>
        <taxon>Archaeoglobi</taxon>
        <taxon>Archaeoglobales</taxon>
        <taxon>Archaeoglobaceae</taxon>
        <taxon>Archaeoglobus</taxon>
    </lineage>
</organism>
<gene>
    <name type="ordered locus">AF_1582</name>
</gene>
<reference key="1">
    <citation type="journal article" date="1997" name="Nature">
        <title>The complete genome sequence of the hyperthermophilic, sulphate-reducing archaeon Archaeoglobus fulgidus.</title>
        <authorList>
            <person name="Klenk H.-P."/>
            <person name="Clayton R.A."/>
            <person name="Tomb J.-F."/>
            <person name="White O."/>
            <person name="Nelson K.E."/>
            <person name="Ketchum K.A."/>
            <person name="Dodson R.J."/>
            <person name="Gwinn M.L."/>
            <person name="Hickey E.K."/>
            <person name="Peterson J.D."/>
            <person name="Richardson D.L."/>
            <person name="Kerlavage A.R."/>
            <person name="Graham D.E."/>
            <person name="Kyrpides N.C."/>
            <person name="Fleischmann R.D."/>
            <person name="Quackenbush J."/>
            <person name="Lee N.H."/>
            <person name="Sutton G.G."/>
            <person name="Gill S.R."/>
            <person name="Kirkness E.F."/>
            <person name="Dougherty B.A."/>
            <person name="McKenney K."/>
            <person name="Adams M.D."/>
            <person name="Loftus B.J."/>
            <person name="Peterson S.N."/>
            <person name="Reich C.I."/>
            <person name="McNeil L.K."/>
            <person name="Badger J.H."/>
            <person name="Glodek A."/>
            <person name="Zhou L."/>
            <person name="Overbeek R."/>
            <person name="Gocayne J.D."/>
            <person name="Weidman J.F."/>
            <person name="McDonald L.A."/>
            <person name="Utterback T.R."/>
            <person name="Cotton M.D."/>
            <person name="Spriggs T."/>
            <person name="Artiach P."/>
            <person name="Kaine B.P."/>
            <person name="Sykes S.M."/>
            <person name="Sadow P.W."/>
            <person name="D'Andrea K.P."/>
            <person name="Bowman C."/>
            <person name="Fujii C."/>
            <person name="Garland S.A."/>
            <person name="Mason T.M."/>
            <person name="Olsen G.J."/>
            <person name="Fraser C.M."/>
            <person name="Smith H.O."/>
            <person name="Woese C.R."/>
            <person name="Venter J.C."/>
        </authorList>
    </citation>
    <scope>NUCLEOTIDE SEQUENCE [LARGE SCALE GENOMIC DNA]</scope>
    <source>
        <strain>ATCC 49558 / DSM 4304 / JCM 9628 / NBRC 100126 / VC-16</strain>
    </source>
</reference>
<accession>O28690</accession>
<comment type="subcellular location">
    <subcellularLocation>
        <location evidence="2">Cell membrane</location>
        <topology evidence="2">Multi-pass membrane protein</topology>
    </subcellularLocation>
</comment>
<evidence type="ECO:0000255" key="1"/>
<evidence type="ECO:0000305" key="2"/>
<dbReference type="EMBL" id="AE000782">
    <property type="protein sequence ID" value="AAB89670.1"/>
    <property type="molecule type" value="Genomic_DNA"/>
</dbReference>
<dbReference type="PIR" id="E69447">
    <property type="entry name" value="E69447"/>
</dbReference>
<dbReference type="PaxDb" id="224325-AF_1582"/>
<dbReference type="EnsemblBacteria" id="AAB89670">
    <property type="protein sequence ID" value="AAB89670"/>
    <property type="gene ID" value="AF_1582"/>
</dbReference>
<dbReference type="KEGG" id="afu:AF_1582"/>
<dbReference type="HOGENOM" id="CLU_2801994_0_0_2"/>
<dbReference type="Proteomes" id="UP000002199">
    <property type="component" value="Chromosome"/>
</dbReference>
<dbReference type="GO" id="GO:0005886">
    <property type="term" value="C:plasma membrane"/>
    <property type="evidence" value="ECO:0007669"/>
    <property type="project" value="UniProtKB-SubCell"/>
</dbReference>
<protein>
    <recommendedName>
        <fullName>Uncharacterized protein AF_1582</fullName>
    </recommendedName>
</protein>
<feature type="chain" id="PRO_0000128033" description="Uncharacterized protein AF_1582">
    <location>
        <begin position="1"/>
        <end position="67"/>
    </location>
</feature>
<feature type="transmembrane region" description="Helical" evidence="1">
    <location>
        <begin position="10"/>
        <end position="32"/>
    </location>
</feature>
<feature type="transmembrane region" description="Helical" evidence="1">
    <location>
        <begin position="44"/>
        <end position="66"/>
    </location>
</feature>